<organism>
    <name type="scientific">Litoria rothii</name>
    <name type="common">Roth's tree frog</name>
    <name type="synonym">Hyla rothii</name>
    <dbReference type="NCBI Taxonomy" id="336074"/>
    <lineage>
        <taxon>Eukaryota</taxon>
        <taxon>Metazoa</taxon>
        <taxon>Chordata</taxon>
        <taxon>Craniata</taxon>
        <taxon>Vertebrata</taxon>
        <taxon>Euteleostomi</taxon>
        <taxon>Amphibia</taxon>
        <taxon>Batrachia</taxon>
        <taxon>Anura</taxon>
        <taxon>Neobatrachia</taxon>
        <taxon>Hyloidea</taxon>
        <taxon>Hylidae</taxon>
        <taxon>Pelodryadinae</taxon>
        <taxon>Litoria</taxon>
    </lineage>
</organism>
<comment type="function">
    <text evidence="2">Lacks antimicrobial activity. Does not inhibit the formation of NO by neuronal nitric oxide.</text>
</comment>
<comment type="subcellular location">
    <subcellularLocation>
        <location evidence="1">Secreted</location>
    </subcellularLocation>
</comment>
<comment type="tissue specificity">
    <text evidence="1">Expressed by the skin dorsal glands.</text>
</comment>
<comment type="similarity">
    <text evidence="4">Belongs to the frog skin active peptide (FSAP) family. Rothein subfamily.</text>
</comment>
<accession>P86515</accession>
<evidence type="ECO:0000269" key="1">
    <source>
    </source>
</evidence>
<evidence type="ECO:0000269" key="2">
    <source>
    </source>
</evidence>
<evidence type="ECO:0000303" key="3">
    <source>
    </source>
</evidence>
<evidence type="ECO:0000305" key="4"/>
<protein>
    <recommendedName>
        <fullName evidence="3">Rothein 4.1</fullName>
    </recommendedName>
</protein>
<dbReference type="GO" id="GO:0005576">
    <property type="term" value="C:extracellular region"/>
    <property type="evidence" value="ECO:0000314"/>
    <property type="project" value="UniProtKB"/>
</dbReference>
<dbReference type="GO" id="GO:0006952">
    <property type="term" value="P:defense response"/>
    <property type="evidence" value="ECO:0007669"/>
    <property type="project" value="UniProtKB-KW"/>
</dbReference>
<reference evidence="4" key="1">
    <citation type="journal article" date="2005" name="Rapid Commun. Mass Spectrom.">
        <title>The rothein peptides from the skin secretion of Roth's tree frog Litoria rothii. Sequence determination using positive and negative ion electrospray mass spectrometry.</title>
        <authorList>
            <person name="Brinkworth C.S."/>
            <person name="Bowie J.H."/>
            <person name="Bilusich D."/>
            <person name="Tyler M.J."/>
        </authorList>
    </citation>
    <scope>PROTEIN SEQUENCE</scope>
    <scope>IDENTIFICATION BY MASS SPECTROMETRY</scope>
    <scope>SUBCELLULAR LOCATION</scope>
    <scope>TISSUE SPECIFICITY</scope>
    <source>
        <tissue evidence="1">Skin secretion</tissue>
    </source>
</reference>
<reference evidence="4" key="2">
    <citation type="journal article" date="2009" name="Toxicon">
        <title>Activities of seasonably variable caerulein and rothein skin peptides from the tree frogs Litoria splendida and Litoria rothii.</title>
        <authorList>
            <person name="Sherman P.J."/>
            <person name="Jackway R.J."/>
            <person name="Nicholson E."/>
            <person name="Musgrave I.F."/>
            <person name="Boontheung P."/>
            <person name="Bowie J.H."/>
        </authorList>
    </citation>
    <scope>FUNCTION</scope>
</reference>
<sequence length="22" mass="2537">AEILFGDVRPPWMPPPIFPEMP</sequence>
<feature type="peptide" id="PRO_0000394441" description="Rothein 4.1" evidence="1">
    <location>
        <begin position="1"/>
        <end position="22"/>
    </location>
</feature>
<name>ROT41_LITRO</name>
<keyword id="KW-0878">Amphibian defense peptide</keyword>
<keyword id="KW-0903">Direct protein sequencing</keyword>
<keyword id="KW-0964">Secreted</keyword>
<proteinExistence type="evidence at protein level"/>